<accession>P13046</accession>
<name>PRR1_TOBAC</name>
<proteinExistence type="evidence at protein level"/>
<protein>
    <recommendedName>
        <fullName>Pathogenesis-related protein R major form</fullName>
    </recommendedName>
    <alternativeName>
        <fullName>Thaumatin-like protein E22</fullName>
    </alternativeName>
</protein>
<organism>
    <name type="scientific">Nicotiana tabacum</name>
    <name type="common">Common tobacco</name>
    <dbReference type="NCBI Taxonomy" id="4097"/>
    <lineage>
        <taxon>Eukaryota</taxon>
        <taxon>Viridiplantae</taxon>
        <taxon>Streptophyta</taxon>
        <taxon>Embryophyta</taxon>
        <taxon>Tracheophyta</taxon>
        <taxon>Spermatophyta</taxon>
        <taxon>Magnoliopsida</taxon>
        <taxon>eudicotyledons</taxon>
        <taxon>Gunneridae</taxon>
        <taxon>Pentapetalae</taxon>
        <taxon>asterids</taxon>
        <taxon>lamiids</taxon>
        <taxon>Solanales</taxon>
        <taxon>Solanaceae</taxon>
        <taxon>Nicotianoideae</taxon>
        <taxon>Nicotianeae</taxon>
        <taxon>Nicotiana</taxon>
    </lineage>
</organism>
<sequence length="226" mass="24667">MNFLKSFPFFAFLYFGQYFVAVTHAATFDIVNKCTYTVWAAASPGGGRRLDSGQSWSINVNPGTVQARIWGRTNCNFDGSGRGNCETGDCNGMLECQGYGKAPNTLAEFALNQPNQDFVDISLVDGFNIPMEFSPTNGGCRNLRCTAPINEQCPAQLKTQGGCNNPCTVIKTNEYCCTNGPGSCGPTDLSRFFKERCPDAYSYPQDDPTSLFTCPSGTNYRVVFCP</sequence>
<keyword id="KW-0903">Direct protein sequencing</keyword>
<keyword id="KW-1015">Disulfide bond</keyword>
<keyword id="KW-0568">Pathogenesis-related protein</keyword>
<keyword id="KW-0611">Plant defense</keyword>
<keyword id="KW-1185">Reference proteome</keyword>
<keyword id="KW-0732">Signal</keyword>
<keyword id="KW-0926">Vacuole</keyword>
<feature type="signal peptide">
    <location>
        <begin position="1"/>
        <end position="25"/>
    </location>
</feature>
<feature type="chain" id="PRO_0000034028" description="Pathogenesis-related protein R major form">
    <location>
        <begin position="26"/>
        <end position="226"/>
    </location>
</feature>
<feature type="disulfide bond" evidence="1">
    <location>
        <begin position="34"/>
        <end position="225"/>
    </location>
</feature>
<feature type="disulfide bond" evidence="1">
    <location>
        <begin position="75"/>
        <end position="85"/>
    </location>
</feature>
<feature type="disulfide bond" evidence="1">
    <location>
        <begin position="90"/>
        <end position="96"/>
    </location>
</feature>
<feature type="disulfide bond" evidence="1">
    <location>
        <begin position="140"/>
        <end position="214"/>
    </location>
</feature>
<feature type="disulfide bond" evidence="1">
    <location>
        <begin position="145"/>
        <end position="197"/>
    </location>
</feature>
<feature type="disulfide bond" evidence="1">
    <location>
        <begin position="153"/>
        <end position="163"/>
    </location>
</feature>
<feature type="disulfide bond" evidence="1">
    <location>
        <begin position="167"/>
        <end position="176"/>
    </location>
</feature>
<feature type="disulfide bond" evidence="1">
    <location>
        <begin position="177"/>
        <end position="184"/>
    </location>
</feature>
<feature type="sequence conflict" description="In Ref. 2." evidence="2" ref="2">
    <original>A</original>
    <variation>D</variation>
    <location>
        <position position="26"/>
    </location>
</feature>
<dbReference type="EMBL" id="X12739">
    <property type="protein sequence ID" value="CAA31235.1"/>
    <property type="molecule type" value="mRNA"/>
</dbReference>
<dbReference type="EMBL" id="X15224">
    <property type="protein sequence ID" value="CAA33293.1"/>
    <property type="molecule type" value="Genomic_DNA"/>
</dbReference>
<dbReference type="PIR" id="JH0230">
    <property type="entry name" value="JH0230"/>
</dbReference>
<dbReference type="RefSeq" id="NP_001312145.1">
    <property type="nucleotide sequence ID" value="NM_001325216.1"/>
</dbReference>
<dbReference type="SMR" id="P13046"/>
<dbReference type="STRING" id="4097.P13046"/>
<dbReference type="PaxDb" id="4097-P13046"/>
<dbReference type="GeneID" id="107776518"/>
<dbReference type="KEGG" id="nta:107776518"/>
<dbReference type="OMA" id="TTHARIW"/>
<dbReference type="OrthoDB" id="430315at2759"/>
<dbReference type="Proteomes" id="UP000084051">
    <property type="component" value="Unplaced"/>
</dbReference>
<dbReference type="GO" id="GO:0005773">
    <property type="term" value="C:vacuole"/>
    <property type="evidence" value="ECO:0007669"/>
    <property type="project" value="UniProtKB-SubCell"/>
</dbReference>
<dbReference type="GO" id="GO:0006952">
    <property type="term" value="P:defense response"/>
    <property type="evidence" value="ECO:0000318"/>
    <property type="project" value="GO_Central"/>
</dbReference>
<dbReference type="FunFam" id="2.60.110.10:FF:000003">
    <property type="entry name" value="Thaumatin I"/>
    <property type="match status" value="1"/>
</dbReference>
<dbReference type="Gene3D" id="2.60.110.10">
    <property type="entry name" value="Thaumatin"/>
    <property type="match status" value="1"/>
</dbReference>
<dbReference type="InterPro" id="IPR037176">
    <property type="entry name" value="Osmotin/thaumatin-like_sf"/>
</dbReference>
<dbReference type="InterPro" id="IPR001938">
    <property type="entry name" value="Thaumatin"/>
</dbReference>
<dbReference type="InterPro" id="IPR017949">
    <property type="entry name" value="Thaumatin_CS"/>
</dbReference>
<dbReference type="PANTHER" id="PTHR31048">
    <property type="entry name" value="OS03G0233200 PROTEIN"/>
    <property type="match status" value="1"/>
</dbReference>
<dbReference type="Pfam" id="PF00314">
    <property type="entry name" value="Thaumatin"/>
    <property type="match status" value="1"/>
</dbReference>
<dbReference type="PIRSF" id="PIRSF002703">
    <property type="entry name" value="Thaumatin"/>
    <property type="match status" value="1"/>
</dbReference>
<dbReference type="PRINTS" id="PR00347">
    <property type="entry name" value="THAUMATIN"/>
</dbReference>
<dbReference type="SMART" id="SM00205">
    <property type="entry name" value="THN"/>
    <property type="match status" value="1"/>
</dbReference>
<dbReference type="SUPFAM" id="SSF49870">
    <property type="entry name" value="Osmotin, thaumatin-like protein"/>
    <property type="match status" value="1"/>
</dbReference>
<dbReference type="PROSITE" id="PS00316">
    <property type="entry name" value="THAUMATIN_1"/>
    <property type="match status" value="1"/>
</dbReference>
<dbReference type="PROSITE" id="PS51367">
    <property type="entry name" value="THAUMATIN_2"/>
    <property type="match status" value="1"/>
</dbReference>
<reference key="1">
    <citation type="journal article" date="1988" name="Plant Mol. Biol.">
        <title>Isolation and nucleotide sequence of a novel cDNA clone encoding the major form of pathogenesis-related protein R.</title>
        <authorList>
            <person name="Payne G."/>
            <person name="Middlesteadt W."/>
            <person name="Williams S."/>
            <person name="Desai N."/>
            <person name="Parks T.D."/>
            <person name="Dincher S."/>
            <person name="Carnes M."/>
            <person name="Ryals J."/>
        </authorList>
        <dbReference type="AGRICOLA" id="IND92000073"/>
    </citation>
    <scope>NUCLEOTIDE SEQUENCE</scope>
    <source>
        <strain>cv. Xanthi</strain>
        <tissue>Leaf</tissue>
    </source>
</reference>
<reference key="2">
    <citation type="journal article" date="1989" name="Plant Mol. Biol.">
        <title>Structure of tobacco genes encoding thaumatin-like proteins.</title>
        <authorList>
            <person name="van Kan J.A.L."/>
            <person name="van de Rhee M.D."/>
            <person name="Zuidema D."/>
            <person name="Cornelissen B.J.C."/>
            <person name="Bol J.F."/>
        </authorList>
    </citation>
    <scope>NUCLEOTIDE SEQUENCE</scope>
    <source>
        <strain>cv. Samsun NN</strain>
    </source>
</reference>
<reference key="3">
    <citation type="journal article" date="1987" name="Physiol. Mol. Plant Pathol.">
        <title>Identification of the virus-induced protein of tobacco leaves that resembles the sweet-protein thaumatin.</title>
        <authorList>
            <person name="Pierpoint W.S."/>
            <person name="Tatham A.S."/>
            <person name="Pappin D.J.C."/>
        </authorList>
    </citation>
    <scope>PROTEIN SEQUENCE</scope>
    <source>
        <tissue>Leaf</tissue>
    </source>
</reference>
<comment type="subcellular location">
    <subcellularLocation>
        <location>Vacuole</location>
    </subcellularLocation>
</comment>
<comment type="miscellaneous">
    <text>PR proteins are acid-soluble, protease-resistant proteins which accumulate in the intercellular spaces of many plants as a result of the hypersensitive reaction to a pathogen.</text>
</comment>
<comment type="miscellaneous">
    <text>PR-R exists as two isoforms in tobacco, a major and a minor form.</text>
</comment>
<comment type="similarity">
    <text evidence="1">Belongs to the thaumatin family.</text>
</comment>
<evidence type="ECO:0000255" key="1">
    <source>
        <dbReference type="PROSITE-ProRule" id="PRU00699"/>
    </source>
</evidence>
<evidence type="ECO:0000305" key="2"/>